<organism>
    <name type="scientific">Rickettsia felis (strain ATCC VR-1525 / URRWXCal2)</name>
    <name type="common">Rickettsia azadi</name>
    <dbReference type="NCBI Taxonomy" id="315456"/>
    <lineage>
        <taxon>Bacteria</taxon>
        <taxon>Pseudomonadati</taxon>
        <taxon>Pseudomonadota</taxon>
        <taxon>Alphaproteobacteria</taxon>
        <taxon>Rickettsiales</taxon>
        <taxon>Rickettsiaceae</taxon>
        <taxon>Rickettsieae</taxon>
        <taxon>Rickettsia</taxon>
        <taxon>spotted fever group</taxon>
    </lineage>
</organism>
<name>RS3_RICFE</name>
<reference key="1">
    <citation type="journal article" date="2005" name="PLoS Biol.">
        <title>The genome sequence of Rickettsia felis identifies the first putative conjugative plasmid in an obligate intracellular parasite.</title>
        <authorList>
            <person name="Ogata H."/>
            <person name="Renesto P."/>
            <person name="Audic S."/>
            <person name="Robert C."/>
            <person name="Blanc G."/>
            <person name="Fournier P.-E."/>
            <person name="Parinello H."/>
            <person name="Claverie J.-M."/>
            <person name="Raoult D."/>
        </authorList>
    </citation>
    <scope>NUCLEOTIDE SEQUENCE [LARGE SCALE GENOMIC DNA]</scope>
    <source>
        <strain>ATCC VR-1525 / URRWXCal2</strain>
    </source>
</reference>
<evidence type="ECO:0000255" key="1">
    <source>
        <dbReference type="HAMAP-Rule" id="MF_01309"/>
    </source>
</evidence>
<evidence type="ECO:0000305" key="2"/>
<comment type="function">
    <text evidence="1">Binds the lower part of the 30S subunit head. Binds mRNA in the 70S ribosome, positioning it for translation.</text>
</comment>
<comment type="subunit">
    <text evidence="1">Part of the 30S ribosomal subunit. Forms a tight complex with proteins S10 and S14.</text>
</comment>
<comment type="similarity">
    <text evidence="1">Belongs to the universal ribosomal protein uS3 family.</text>
</comment>
<dbReference type="EMBL" id="CP000053">
    <property type="protein sequence ID" value="AAY61135.1"/>
    <property type="molecule type" value="Genomic_DNA"/>
</dbReference>
<dbReference type="SMR" id="Q4UMS3"/>
<dbReference type="STRING" id="315456.RF_0284"/>
<dbReference type="KEGG" id="rfe:RF_0284"/>
<dbReference type="eggNOG" id="COG0092">
    <property type="taxonomic scope" value="Bacteria"/>
</dbReference>
<dbReference type="HOGENOM" id="CLU_058591_0_2_5"/>
<dbReference type="OrthoDB" id="9806396at2"/>
<dbReference type="Proteomes" id="UP000008548">
    <property type="component" value="Chromosome"/>
</dbReference>
<dbReference type="GO" id="GO:0022627">
    <property type="term" value="C:cytosolic small ribosomal subunit"/>
    <property type="evidence" value="ECO:0007669"/>
    <property type="project" value="TreeGrafter"/>
</dbReference>
<dbReference type="GO" id="GO:0003729">
    <property type="term" value="F:mRNA binding"/>
    <property type="evidence" value="ECO:0007669"/>
    <property type="project" value="UniProtKB-UniRule"/>
</dbReference>
<dbReference type="GO" id="GO:0019843">
    <property type="term" value="F:rRNA binding"/>
    <property type="evidence" value="ECO:0007669"/>
    <property type="project" value="UniProtKB-UniRule"/>
</dbReference>
<dbReference type="GO" id="GO:0003735">
    <property type="term" value="F:structural constituent of ribosome"/>
    <property type="evidence" value="ECO:0007669"/>
    <property type="project" value="InterPro"/>
</dbReference>
<dbReference type="GO" id="GO:0006412">
    <property type="term" value="P:translation"/>
    <property type="evidence" value="ECO:0007669"/>
    <property type="project" value="UniProtKB-UniRule"/>
</dbReference>
<dbReference type="CDD" id="cd02412">
    <property type="entry name" value="KH-II_30S_S3"/>
    <property type="match status" value="1"/>
</dbReference>
<dbReference type="FunFam" id="3.30.300.20:FF:000001">
    <property type="entry name" value="30S ribosomal protein S3"/>
    <property type="match status" value="1"/>
</dbReference>
<dbReference type="Gene3D" id="3.30.300.20">
    <property type="match status" value="1"/>
</dbReference>
<dbReference type="Gene3D" id="3.30.1140.32">
    <property type="entry name" value="Ribosomal protein S3, C-terminal domain"/>
    <property type="match status" value="1"/>
</dbReference>
<dbReference type="HAMAP" id="MF_01309_B">
    <property type="entry name" value="Ribosomal_uS3_B"/>
    <property type="match status" value="1"/>
</dbReference>
<dbReference type="InterPro" id="IPR004087">
    <property type="entry name" value="KH_dom"/>
</dbReference>
<dbReference type="InterPro" id="IPR015946">
    <property type="entry name" value="KH_dom-like_a/b"/>
</dbReference>
<dbReference type="InterPro" id="IPR004044">
    <property type="entry name" value="KH_dom_type_2"/>
</dbReference>
<dbReference type="InterPro" id="IPR009019">
    <property type="entry name" value="KH_sf_prok-type"/>
</dbReference>
<dbReference type="InterPro" id="IPR036419">
    <property type="entry name" value="Ribosomal_S3_C_sf"/>
</dbReference>
<dbReference type="InterPro" id="IPR005704">
    <property type="entry name" value="Ribosomal_uS3_bac-typ"/>
</dbReference>
<dbReference type="InterPro" id="IPR001351">
    <property type="entry name" value="Ribosomal_uS3_C"/>
</dbReference>
<dbReference type="InterPro" id="IPR018280">
    <property type="entry name" value="Ribosomal_uS3_CS"/>
</dbReference>
<dbReference type="NCBIfam" id="TIGR01009">
    <property type="entry name" value="rpsC_bact"/>
    <property type="match status" value="1"/>
</dbReference>
<dbReference type="PANTHER" id="PTHR11760">
    <property type="entry name" value="30S/40S RIBOSOMAL PROTEIN S3"/>
    <property type="match status" value="1"/>
</dbReference>
<dbReference type="PANTHER" id="PTHR11760:SF19">
    <property type="entry name" value="SMALL RIBOSOMAL SUBUNIT PROTEIN US3C"/>
    <property type="match status" value="1"/>
</dbReference>
<dbReference type="Pfam" id="PF07650">
    <property type="entry name" value="KH_2"/>
    <property type="match status" value="1"/>
</dbReference>
<dbReference type="Pfam" id="PF00189">
    <property type="entry name" value="Ribosomal_S3_C"/>
    <property type="match status" value="1"/>
</dbReference>
<dbReference type="SMART" id="SM00322">
    <property type="entry name" value="KH"/>
    <property type="match status" value="1"/>
</dbReference>
<dbReference type="SUPFAM" id="SSF54814">
    <property type="entry name" value="Prokaryotic type KH domain (KH-domain type II)"/>
    <property type="match status" value="1"/>
</dbReference>
<dbReference type="SUPFAM" id="SSF54821">
    <property type="entry name" value="Ribosomal protein S3 C-terminal domain"/>
    <property type="match status" value="1"/>
</dbReference>
<dbReference type="PROSITE" id="PS50823">
    <property type="entry name" value="KH_TYPE_2"/>
    <property type="match status" value="1"/>
</dbReference>
<dbReference type="PROSITE" id="PS00548">
    <property type="entry name" value="RIBOSOMAL_S3"/>
    <property type="match status" value="1"/>
</dbReference>
<feature type="chain" id="PRO_0000230724" description="Small ribosomal subunit protein uS3">
    <location>
        <begin position="1"/>
        <end position="217"/>
    </location>
</feature>
<feature type="domain" description="KH type-2" evidence="1">
    <location>
        <begin position="40"/>
        <end position="110"/>
    </location>
</feature>
<sequence>MGQKVCAHGFRVGPTLIKGWDSVLYAEKHYKTLFIQDLKIRDLINKGFNQAQVSRVLIERPSNKSIIININAKKPNIIIGRNGSEIDKIKKAIEKMTSLKEVYINIHEVRKFNIDAAIVAQTIALQLEKRVSFRKAMKTAIQASFKQGGQGIRVSCSGRLGGAEIARTEWYIEGRMPLHTLRADIDYSTAEAITTYGIIGVKVWIYKGEYTENKRYN</sequence>
<gene>
    <name evidence="1" type="primary">rpsC</name>
    <name type="ordered locus">RF_0284</name>
</gene>
<accession>Q4UMS3</accession>
<keyword id="KW-0687">Ribonucleoprotein</keyword>
<keyword id="KW-0689">Ribosomal protein</keyword>
<keyword id="KW-0694">RNA-binding</keyword>
<keyword id="KW-0699">rRNA-binding</keyword>
<protein>
    <recommendedName>
        <fullName evidence="1">Small ribosomal subunit protein uS3</fullName>
    </recommendedName>
    <alternativeName>
        <fullName evidence="2">30S ribosomal protein S3</fullName>
    </alternativeName>
</protein>
<proteinExistence type="inferred from homology"/>